<feature type="chain" id="PRO_1000097438" description="Thymidylate kinase">
    <location>
        <begin position="1"/>
        <end position="206"/>
    </location>
</feature>
<feature type="binding site" evidence="1">
    <location>
        <begin position="7"/>
        <end position="14"/>
    </location>
    <ligand>
        <name>ATP</name>
        <dbReference type="ChEBI" id="CHEBI:30616"/>
    </ligand>
</feature>
<protein>
    <recommendedName>
        <fullName evidence="1">Thymidylate kinase</fullName>
        <ecNumber evidence="1">2.7.4.9</ecNumber>
    </recommendedName>
    <alternativeName>
        <fullName evidence="1">dTMP kinase</fullName>
    </alternativeName>
</protein>
<organism>
    <name type="scientific">Synechococcus sp. (strain JA-2-3B'a(2-13))</name>
    <name type="common">Cyanobacteria bacterium Yellowstone B-Prime</name>
    <dbReference type="NCBI Taxonomy" id="321332"/>
    <lineage>
        <taxon>Bacteria</taxon>
        <taxon>Bacillati</taxon>
        <taxon>Cyanobacteriota</taxon>
        <taxon>Cyanophyceae</taxon>
        <taxon>Synechococcales</taxon>
        <taxon>Synechococcaceae</taxon>
        <taxon>Synechococcus</taxon>
    </lineage>
</organism>
<proteinExistence type="inferred from homology"/>
<sequence>MFITLEGGEGVGKTTQQALLVERLRQEGYACLCTREPGGTALGKTLRELLLHGDPFSPLAELLLYAADRAEHVSKVIAPALAAGQVVVCDRFTDSTLAYQGYGRGLDLEKIRQLNHLATGGLQPHLTLWLDLPPEVGLARAKARDRLEQERLEFHRRVYQGFQALAAAEPQRIVRISAQGSPAEVAARLWSVVEPRLPLATAGREP</sequence>
<comment type="function">
    <text evidence="1">Phosphorylation of dTMP to form dTDP in both de novo and salvage pathways of dTTP synthesis.</text>
</comment>
<comment type="catalytic activity">
    <reaction evidence="1">
        <text>dTMP + ATP = dTDP + ADP</text>
        <dbReference type="Rhea" id="RHEA:13517"/>
        <dbReference type="ChEBI" id="CHEBI:30616"/>
        <dbReference type="ChEBI" id="CHEBI:58369"/>
        <dbReference type="ChEBI" id="CHEBI:63528"/>
        <dbReference type="ChEBI" id="CHEBI:456216"/>
        <dbReference type="EC" id="2.7.4.9"/>
    </reaction>
</comment>
<comment type="similarity">
    <text evidence="1">Belongs to the thymidylate kinase family.</text>
</comment>
<name>KTHY_SYNJB</name>
<keyword id="KW-0067">ATP-binding</keyword>
<keyword id="KW-0418">Kinase</keyword>
<keyword id="KW-0545">Nucleotide biosynthesis</keyword>
<keyword id="KW-0547">Nucleotide-binding</keyword>
<keyword id="KW-1185">Reference proteome</keyword>
<keyword id="KW-0808">Transferase</keyword>
<accession>Q2JN62</accession>
<dbReference type="EC" id="2.7.4.9" evidence="1"/>
<dbReference type="EMBL" id="CP000240">
    <property type="protein sequence ID" value="ABD01813.1"/>
    <property type="molecule type" value="Genomic_DNA"/>
</dbReference>
<dbReference type="RefSeq" id="WP_011432470.1">
    <property type="nucleotide sequence ID" value="NC_007776.1"/>
</dbReference>
<dbReference type="SMR" id="Q2JN62"/>
<dbReference type="STRING" id="321332.CYB_0832"/>
<dbReference type="KEGG" id="cyb:CYB_0832"/>
<dbReference type="eggNOG" id="COG0125">
    <property type="taxonomic scope" value="Bacteria"/>
</dbReference>
<dbReference type="HOGENOM" id="CLU_049131_0_2_3"/>
<dbReference type="OrthoDB" id="9774907at2"/>
<dbReference type="Proteomes" id="UP000001938">
    <property type="component" value="Chromosome"/>
</dbReference>
<dbReference type="GO" id="GO:0005829">
    <property type="term" value="C:cytosol"/>
    <property type="evidence" value="ECO:0007669"/>
    <property type="project" value="TreeGrafter"/>
</dbReference>
<dbReference type="GO" id="GO:0005524">
    <property type="term" value="F:ATP binding"/>
    <property type="evidence" value="ECO:0007669"/>
    <property type="project" value="UniProtKB-UniRule"/>
</dbReference>
<dbReference type="GO" id="GO:0004798">
    <property type="term" value="F:dTMP kinase activity"/>
    <property type="evidence" value="ECO:0007669"/>
    <property type="project" value="UniProtKB-UniRule"/>
</dbReference>
<dbReference type="GO" id="GO:0006233">
    <property type="term" value="P:dTDP biosynthetic process"/>
    <property type="evidence" value="ECO:0007669"/>
    <property type="project" value="InterPro"/>
</dbReference>
<dbReference type="GO" id="GO:0006235">
    <property type="term" value="P:dTTP biosynthetic process"/>
    <property type="evidence" value="ECO:0007669"/>
    <property type="project" value="UniProtKB-UniRule"/>
</dbReference>
<dbReference type="GO" id="GO:0006227">
    <property type="term" value="P:dUDP biosynthetic process"/>
    <property type="evidence" value="ECO:0007669"/>
    <property type="project" value="TreeGrafter"/>
</dbReference>
<dbReference type="CDD" id="cd01672">
    <property type="entry name" value="TMPK"/>
    <property type="match status" value="1"/>
</dbReference>
<dbReference type="FunFam" id="3.40.50.300:FF:000225">
    <property type="entry name" value="Thymidylate kinase"/>
    <property type="match status" value="1"/>
</dbReference>
<dbReference type="Gene3D" id="3.40.50.300">
    <property type="entry name" value="P-loop containing nucleotide triphosphate hydrolases"/>
    <property type="match status" value="1"/>
</dbReference>
<dbReference type="HAMAP" id="MF_00165">
    <property type="entry name" value="Thymidylate_kinase"/>
    <property type="match status" value="1"/>
</dbReference>
<dbReference type="InterPro" id="IPR027417">
    <property type="entry name" value="P-loop_NTPase"/>
</dbReference>
<dbReference type="InterPro" id="IPR039430">
    <property type="entry name" value="Thymidylate_kin-like_dom"/>
</dbReference>
<dbReference type="InterPro" id="IPR018095">
    <property type="entry name" value="Thymidylate_kin_CS"/>
</dbReference>
<dbReference type="InterPro" id="IPR018094">
    <property type="entry name" value="Thymidylate_kinase"/>
</dbReference>
<dbReference type="NCBIfam" id="TIGR00041">
    <property type="entry name" value="DTMP_kinase"/>
    <property type="match status" value="1"/>
</dbReference>
<dbReference type="PANTHER" id="PTHR10344">
    <property type="entry name" value="THYMIDYLATE KINASE"/>
    <property type="match status" value="1"/>
</dbReference>
<dbReference type="PANTHER" id="PTHR10344:SF4">
    <property type="entry name" value="UMP-CMP KINASE 2, MITOCHONDRIAL"/>
    <property type="match status" value="1"/>
</dbReference>
<dbReference type="Pfam" id="PF02223">
    <property type="entry name" value="Thymidylate_kin"/>
    <property type="match status" value="1"/>
</dbReference>
<dbReference type="SUPFAM" id="SSF52540">
    <property type="entry name" value="P-loop containing nucleoside triphosphate hydrolases"/>
    <property type="match status" value="1"/>
</dbReference>
<dbReference type="PROSITE" id="PS01331">
    <property type="entry name" value="THYMIDYLATE_KINASE"/>
    <property type="match status" value="1"/>
</dbReference>
<reference key="1">
    <citation type="journal article" date="2007" name="ISME J.">
        <title>Population level functional diversity in a microbial community revealed by comparative genomic and metagenomic analyses.</title>
        <authorList>
            <person name="Bhaya D."/>
            <person name="Grossman A.R."/>
            <person name="Steunou A.-S."/>
            <person name="Khuri N."/>
            <person name="Cohan F.M."/>
            <person name="Hamamura N."/>
            <person name="Melendrez M.C."/>
            <person name="Bateson M.M."/>
            <person name="Ward D.M."/>
            <person name="Heidelberg J.F."/>
        </authorList>
    </citation>
    <scope>NUCLEOTIDE SEQUENCE [LARGE SCALE GENOMIC DNA]</scope>
    <source>
        <strain>JA-2-3B'a(2-13)</strain>
    </source>
</reference>
<evidence type="ECO:0000255" key="1">
    <source>
        <dbReference type="HAMAP-Rule" id="MF_00165"/>
    </source>
</evidence>
<gene>
    <name evidence="1" type="primary">tmk</name>
    <name type="ordered locus">CYB_0832</name>
</gene>